<reference key="1">
    <citation type="journal article" date="1997" name="DNA Res.">
        <title>Structural analysis of Arabidopsis thaliana chromosome 5. I. Sequence features of the 1.6 Mb regions covered by twenty physically assigned P1 clones.</title>
        <authorList>
            <person name="Sato S."/>
            <person name="Kotani H."/>
            <person name="Nakamura Y."/>
            <person name="Kaneko T."/>
            <person name="Asamizu E."/>
            <person name="Fukami M."/>
            <person name="Miyajima N."/>
            <person name="Tabata S."/>
        </authorList>
    </citation>
    <scope>NUCLEOTIDE SEQUENCE [LARGE SCALE GENOMIC DNA]</scope>
    <source>
        <strain>cv. Columbia</strain>
    </source>
</reference>
<reference key="2">
    <citation type="journal article" date="2000" name="Nature">
        <title>Sequence and analysis of chromosome 5 of the plant Arabidopsis thaliana.</title>
        <authorList>
            <person name="Tabata S."/>
            <person name="Kaneko T."/>
            <person name="Nakamura Y."/>
            <person name="Kotani H."/>
            <person name="Kato T."/>
            <person name="Asamizu E."/>
            <person name="Miyajima N."/>
            <person name="Sasamoto S."/>
            <person name="Kimura T."/>
            <person name="Hosouchi T."/>
            <person name="Kawashima K."/>
            <person name="Kohara M."/>
            <person name="Matsumoto M."/>
            <person name="Matsuno A."/>
            <person name="Muraki A."/>
            <person name="Nakayama S."/>
            <person name="Nakazaki N."/>
            <person name="Naruo K."/>
            <person name="Okumura S."/>
            <person name="Shinpo S."/>
            <person name="Takeuchi C."/>
            <person name="Wada T."/>
            <person name="Watanabe A."/>
            <person name="Yamada M."/>
            <person name="Yasuda M."/>
            <person name="Sato S."/>
            <person name="de la Bastide M."/>
            <person name="Huang E."/>
            <person name="Spiegel L."/>
            <person name="Gnoj L."/>
            <person name="O'Shaughnessy A."/>
            <person name="Preston R."/>
            <person name="Habermann K."/>
            <person name="Murray J."/>
            <person name="Johnson D."/>
            <person name="Rohlfing T."/>
            <person name="Nelson J."/>
            <person name="Stoneking T."/>
            <person name="Pepin K."/>
            <person name="Spieth J."/>
            <person name="Sekhon M."/>
            <person name="Armstrong J."/>
            <person name="Becker M."/>
            <person name="Belter E."/>
            <person name="Cordum H."/>
            <person name="Cordes M."/>
            <person name="Courtney L."/>
            <person name="Courtney W."/>
            <person name="Dante M."/>
            <person name="Du H."/>
            <person name="Edwards J."/>
            <person name="Fryman J."/>
            <person name="Haakensen B."/>
            <person name="Lamar E."/>
            <person name="Latreille P."/>
            <person name="Leonard S."/>
            <person name="Meyer R."/>
            <person name="Mulvaney E."/>
            <person name="Ozersky P."/>
            <person name="Riley A."/>
            <person name="Strowmatt C."/>
            <person name="Wagner-McPherson C."/>
            <person name="Wollam A."/>
            <person name="Yoakum M."/>
            <person name="Bell M."/>
            <person name="Dedhia N."/>
            <person name="Parnell L."/>
            <person name="Shah R."/>
            <person name="Rodriguez M."/>
            <person name="Hoon See L."/>
            <person name="Vil D."/>
            <person name="Baker J."/>
            <person name="Kirchoff K."/>
            <person name="Toth K."/>
            <person name="King L."/>
            <person name="Bahret A."/>
            <person name="Miller B."/>
            <person name="Marra M.A."/>
            <person name="Martienssen R."/>
            <person name="McCombie W.R."/>
            <person name="Wilson R.K."/>
            <person name="Murphy G."/>
            <person name="Bancroft I."/>
            <person name="Volckaert G."/>
            <person name="Wambutt R."/>
            <person name="Duesterhoeft A."/>
            <person name="Stiekema W."/>
            <person name="Pohl T."/>
            <person name="Entian K.-D."/>
            <person name="Terryn N."/>
            <person name="Hartley N."/>
            <person name="Bent E."/>
            <person name="Johnson S."/>
            <person name="Langham S.-A."/>
            <person name="McCullagh B."/>
            <person name="Robben J."/>
            <person name="Grymonprez B."/>
            <person name="Zimmermann W."/>
            <person name="Ramsperger U."/>
            <person name="Wedler H."/>
            <person name="Balke K."/>
            <person name="Wedler E."/>
            <person name="Peters S."/>
            <person name="van Staveren M."/>
            <person name="Dirkse W."/>
            <person name="Mooijman P."/>
            <person name="Klein Lankhorst R."/>
            <person name="Weitzenegger T."/>
            <person name="Bothe G."/>
            <person name="Rose M."/>
            <person name="Hauf J."/>
            <person name="Berneiser S."/>
            <person name="Hempel S."/>
            <person name="Feldpausch M."/>
            <person name="Lamberth S."/>
            <person name="Villarroel R."/>
            <person name="Gielen J."/>
            <person name="Ardiles W."/>
            <person name="Bents O."/>
            <person name="Lemcke K."/>
            <person name="Kolesov G."/>
            <person name="Mayer K.F.X."/>
            <person name="Rudd S."/>
            <person name="Schoof H."/>
            <person name="Schueller C."/>
            <person name="Zaccaria P."/>
            <person name="Mewes H.-W."/>
            <person name="Bevan M."/>
            <person name="Fransz P.F."/>
        </authorList>
    </citation>
    <scope>NUCLEOTIDE SEQUENCE [LARGE SCALE GENOMIC DNA]</scope>
    <source>
        <strain>cv. Columbia</strain>
    </source>
</reference>
<reference key="3">
    <citation type="journal article" date="2017" name="Plant J.">
        <title>Araport11: a complete reannotation of the Arabidopsis thaliana reference genome.</title>
        <authorList>
            <person name="Cheng C.Y."/>
            <person name="Krishnakumar V."/>
            <person name="Chan A.P."/>
            <person name="Thibaud-Nissen F."/>
            <person name="Schobel S."/>
            <person name="Town C.D."/>
        </authorList>
    </citation>
    <scope>GENOME REANNOTATION</scope>
    <source>
        <strain>cv. Columbia</strain>
    </source>
</reference>
<reference key="4">
    <citation type="journal article" date="2005" name="Plant Physiol.">
        <title>Homeodomain leucine zipper class I genes in Arabidopsis. Expression patterns and phylogenetic relationships.</title>
        <authorList>
            <person name="Henriksson E."/>
            <person name="Olsson A.S.B."/>
            <person name="Johannesson H."/>
            <person name="Johansson H."/>
            <person name="Hanson J."/>
            <person name="Engstroem P."/>
            <person name="Soederman E."/>
        </authorList>
    </citation>
    <scope>GENE FAMILY</scope>
    <scope>TISSUE SPECIFICITY</scope>
</reference>
<comment type="function">
    <text evidence="1">Putative transcription factor.</text>
</comment>
<comment type="subcellular location">
    <subcellularLocation>
        <location evidence="4">Nucleus</location>
    </subcellularLocation>
</comment>
<comment type="tissue specificity">
    <text evidence="3">Widely expressed.</text>
</comment>
<comment type="similarity">
    <text evidence="4">Belongs to the HD-ZIP homeobox family. Class I subfamily.</text>
</comment>
<comment type="sequence caution" evidence="4">
    <conflict type="erroneous gene model prediction">
        <sequence resource="EMBL-CDS" id="BAB08604"/>
    </conflict>
</comment>
<comment type="sequence caution" evidence="4">
    <conflict type="erroneous gene model prediction">
        <sequence resource="EMBL-CDS" id="CAB82944"/>
    </conflict>
</comment>
<name>ATB51_ARATH</name>
<keyword id="KW-0238">DNA-binding</keyword>
<keyword id="KW-0371">Homeobox</keyword>
<keyword id="KW-0539">Nucleus</keyword>
<keyword id="KW-1185">Reference proteome</keyword>
<keyword id="KW-0804">Transcription</keyword>
<keyword id="KW-0805">Transcription regulation</keyword>
<feature type="chain" id="PRO_0000257802" description="Putative homeobox-leucine zipper protein ATHB-51">
    <location>
        <begin position="1"/>
        <end position="235"/>
    </location>
</feature>
<feature type="DNA-binding region" description="Homeobox" evidence="2">
    <location>
        <begin position="74"/>
        <end position="133"/>
    </location>
</feature>
<feature type="region of interest" description="Leucine-zipper">
    <location>
        <begin position="134"/>
        <end position="162"/>
    </location>
</feature>
<gene>
    <name type="primary">ATHB-51</name>
    <name type="synonym">HB51</name>
    <name type="ordered locus">At5g03790</name>
    <name type="ORF">F17C15_210</name>
    <name type="ORF">MED24.8</name>
</gene>
<proteinExistence type="evidence at transcript level"/>
<sequence length="235" mass="26840">MEWSTTSNVENVRVAFMPPPWPESSSFNSLHSFNFDPYAGNSYTPGDTQTGPVISVPESEKIMNAYRFPNNNNEMIKKKRLTSGQLASLERSFQEEIKLDSDRKVKLSRELGLQPRQIAVWFQNRRARWKAKQLEQLYDSLRQEYDVVSREKQMLHDEVKKLRALLRDQGLIKKQISAGTIKVSGEEDTVEISSVVVAHPRTENMNANQITGGNQVYGQYNNPMLVASSGWPSYP</sequence>
<protein>
    <recommendedName>
        <fullName>Putative homeobox-leucine zipper protein ATHB-51</fullName>
    </recommendedName>
    <alternativeName>
        <fullName>HD-ZIP protein ATHB-51</fullName>
    </alternativeName>
    <alternativeName>
        <fullName>Homeodomain transcription factor ATHB-51</fullName>
    </alternativeName>
</protein>
<accession>Q9LZR0</accession>
<accession>F4KGR1</accession>
<evidence type="ECO:0000250" key="1"/>
<evidence type="ECO:0000255" key="2">
    <source>
        <dbReference type="PROSITE-ProRule" id="PRU00108"/>
    </source>
</evidence>
<evidence type="ECO:0000269" key="3">
    <source>
    </source>
</evidence>
<evidence type="ECO:0000305" key="4"/>
<dbReference type="EMBL" id="AB005235">
    <property type="protein sequence ID" value="BAB08604.1"/>
    <property type="status" value="ALT_SEQ"/>
    <property type="molecule type" value="Genomic_DNA"/>
</dbReference>
<dbReference type="EMBL" id="AL162506">
    <property type="protein sequence ID" value="CAB82944.1"/>
    <property type="status" value="ALT_SEQ"/>
    <property type="molecule type" value="Genomic_DNA"/>
</dbReference>
<dbReference type="EMBL" id="CP002688">
    <property type="protein sequence ID" value="AED90654.1"/>
    <property type="molecule type" value="Genomic_DNA"/>
</dbReference>
<dbReference type="PIR" id="T48406">
    <property type="entry name" value="T48406"/>
</dbReference>
<dbReference type="RefSeq" id="NP_195999.2">
    <property type="nucleotide sequence ID" value="NM_120460.5"/>
</dbReference>
<dbReference type="SMR" id="Q9LZR0"/>
<dbReference type="BioGRID" id="16999">
    <property type="interactions" value="9"/>
</dbReference>
<dbReference type="FunCoup" id="Q9LZR0">
    <property type="interactions" value="57"/>
</dbReference>
<dbReference type="IntAct" id="Q9LZR0">
    <property type="interactions" value="9"/>
</dbReference>
<dbReference type="STRING" id="3702.Q9LZR0"/>
<dbReference type="PaxDb" id="3702-AT5G03790.1"/>
<dbReference type="EnsemblPlants" id="AT5G03790.1">
    <property type="protein sequence ID" value="AT5G03790.1"/>
    <property type="gene ID" value="AT5G03790"/>
</dbReference>
<dbReference type="GeneID" id="831723"/>
<dbReference type="Gramene" id="AT5G03790.1">
    <property type="protein sequence ID" value="AT5G03790.1"/>
    <property type="gene ID" value="AT5G03790"/>
</dbReference>
<dbReference type="KEGG" id="ath:AT5G03790"/>
<dbReference type="Araport" id="AT5G03790"/>
<dbReference type="TAIR" id="AT5G03790">
    <property type="gene designation" value="HB51"/>
</dbReference>
<dbReference type="eggNOG" id="KOG0483">
    <property type="taxonomic scope" value="Eukaryota"/>
</dbReference>
<dbReference type="HOGENOM" id="CLU_105197_0_0_1"/>
<dbReference type="InParanoid" id="Q9LZR0"/>
<dbReference type="OMA" id="AHPRTEN"/>
<dbReference type="PRO" id="PR:Q9LZR0"/>
<dbReference type="Proteomes" id="UP000006548">
    <property type="component" value="Chromosome 5"/>
</dbReference>
<dbReference type="ExpressionAtlas" id="Q9LZR0">
    <property type="expression patterns" value="baseline and differential"/>
</dbReference>
<dbReference type="GO" id="GO:0005634">
    <property type="term" value="C:nucleus"/>
    <property type="evidence" value="ECO:0007669"/>
    <property type="project" value="UniProtKB-SubCell"/>
</dbReference>
<dbReference type="GO" id="GO:0003700">
    <property type="term" value="F:DNA-binding transcription factor activity"/>
    <property type="evidence" value="ECO:0000250"/>
    <property type="project" value="TAIR"/>
</dbReference>
<dbReference type="GO" id="GO:0000981">
    <property type="term" value="F:DNA-binding transcription factor activity, RNA polymerase II-specific"/>
    <property type="evidence" value="ECO:0007669"/>
    <property type="project" value="InterPro"/>
</dbReference>
<dbReference type="GO" id="GO:0043565">
    <property type="term" value="F:sequence-specific DNA binding"/>
    <property type="evidence" value="ECO:0000314"/>
    <property type="project" value="TAIR"/>
</dbReference>
<dbReference type="GO" id="GO:0010434">
    <property type="term" value="P:bract formation"/>
    <property type="evidence" value="ECO:0000316"/>
    <property type="project" value="TAIR"/>
</dbReference>
<dbReference type="GO" id="GO:0010582">
    <property type="term" value="P:floral meristem determinacy"/>
    <property type="evidence" value="ECO:0000316"/>
    <property type="project" value="TAIR"/>
</dbReference>
<dbReference type="GO" id="GO:0009965">
    <property type="term" value="P:leaf morphogenesis"/>
    <property type="evidence" value="ECO:0000315"/>
    <property type="project" value="TAIR"/>
</dbReference>
<dbReference type="GO" id="GO:0045893">
    <property type="term" value="P:positive regulation of DNA-templated transcription"/>
    <property type="evidence" value="ECO:0000316"/>
    <property type="project" value="TAIR"/>
</dbReference>
<dbReference type="GO" id="GO:0048510">
    <property type="term" value="P:regulation of timing of transition from vegetative to reproductive phase"/>
    <property type="evidence" value="ECO:0000316"/>
    <property type="project" value="TAIR"/>
</dbReference>
<dbReference type="CDD" id="cd00086">
    <property type="entry name" value="homeodomain"/>
    <property type="match status" value="1"/>
</dbReference>
<dbReference type="FunFam" id="1.10.10.60:FF:000385">
    <property type="entry name" value="Putative homeobox-leucine zipper protein ATHB-51"/>
    <property type="match status" value="1"/>
</dbReference>
<dbReference type="Gene3D" id="1.10.10.60">
    <property type="entry name" value="Homeodomain-like"/>
    <property type="match status" value="1"/>
</dbReference>
<dbReference type="InterPro" id="IPR001356">
    <property type="entry name" value="HD"/>
</dbReference>
<dbReference type="InterPro" id="IPR045224">
    <property type="entry name" value="HDZip_class_I_plant"/>
</dbReference>
<dbReference type="InterPro" id="IPR017970">
    <property type="entry name" value="Homeobox_CS"/>
</dbReference>
<dbReference type="InterPro" id="IPR009057">
    <property type="entry name" value="Homeodomain-like_sf"/>
</dbReference>
<dbReference type="InterPro" id="IPR000047">
    <property type="entry name" value="HTH_motif"/>
</dbReference>
<dbReference type="PANTHER" id="PTHR24326">
    <property type="entry name" value="HOMEOBOX-LEUCINE ZIPPER PROTEIN"/>
    <property type="match status" value="1"/>
</dbReference>
<dbReference type="PANTHER" id="PTHR24326:SF591">
    <property type="entry name" value="HOMEOBOX-LEUCINE ZIPPER PROTEIN ATHB-51-RELATED"/>
    <property type="match status" value="1"/>
</dbReference>
<dbReference type="Pfam" id="PF00046">
    <property type="entry name" value="Homeodomain"/>
    <property type="match status" value="1"/>
</dbReference>
<dbReference type="PRINTS" id="PR00031">
    <property type="entry name" value="HTHREPRESSR"/>
</dbReference>
<dbReference type="SMART" id="SM00389">
    <property type="entry name" value="HOX"/>
    <property type="match status" value="1"/>
</dbReference>
<dbReference type="SUPFAM" id="SSF46689">
    <property type="entry name" value="Homeodomain-like"/>
    <property type="match status" value="1"/>
</dbReference>
<dbReference type="PROSITE" id="PS00027">
    <property type="entry name" value="HOMEOBOX_1"/>
    <property type="match status" value="1"/>
</dbReference>
<dbReference type="PROSITE" id="PS50071">
    <property type="entry name" value="HOMEOBOX_2"/>
    <property type="match status" value="1"/>
</dbReference>
<organism>
    <name type="scientific">Arabidopsis thaliana</name>
    <name type="common">Mouse-ear cress</name>
    <dbReference type="NCBI Taxonomy" id="3702"/>
    <lineage>
        <taxon>Eukaryota</taxon>
        <taxon>Viridiplantae</taxon>
        <taxon>Streptophyta</taxon>
        <taxon>Embryophyta</taxon>
        <taxon>Tracheophyta</taxon>
        <taxon>Spermatophyta</taxon>
        <taxon>Magnoliopsida</taxon>
        <taxon>eudicotyledons</taxon>
        <taxon>Gunneridae</taxon>
        <taxon>Pentapetalae</taxon>
        <taxon>rosids</taxon>
        <taxon>malvids</taxon>
        <taxon>Brassicales</taxon>
        <taxon>Brassicaceae</taxon>
        <taxon>Camelineae</taxon>
        <taxon>Arabidopsis</taxon>
    </lineage>
</organism>